<comment type="function">
    <text evidence="1">Plays an essential role in the initiation and regulation of chromosomal replication. ATP-DnaA binds to the origin of replication (oriC) to initiate formation of the DNA replication initiation complex once per cell cycle. Binds the DnaA box (a 9 base pair repeat at the origin) and separates the double-stranded (ds)DNA. Forms a right-handed helical filament on oriC DNA; dsDNA binds to the exterior of the filament while single-stranded (ss)DNA is stabiized in the filament's interior. The ATP-DnaA-oriC complex binds and stabilizes one strand of the AT-rich DNA unwinding element (DUE), permitting loading of DNA polymerase. After initiation quickly degrades to an ADP-DnaA complex that is not apt for DNA replication. Binds acidic phospholipids.</text>
</comment>
<comment type="subunit">
    <text evidence="1">Oligomerizes as a right-handed, spiral filament on DNA at oriC.</text>
</comment>
<comment type="interaction">
    <interactant intactId="EBI-1582316">
        <id>O83047</id>
    </interactant>
    <interactant intactId="EBI-1582320">
        <id>O83097</id>
        <label>dnaB</label>
    </interactant>
    <organismsDiffer>false</organismsDiffer>
    <experiments>2</experiments>
</comment>
<comment type="interaction">
    <interactant intactId="EBI-1582316">
        <id>O83047</id>
    </interactant>
    <interactant intactId="EBI-1589991">
        <id>O83213</id>
        <label>TP_0183</label>
    </interactant>
    <organismsDiffer>false</organismsDiffer>
    <experiments>2</experiments>
</comment>
<comment type="subcellular location">
    <subcellularLocation>
        <location evidence="1">Cytoplasm</location>
    </subcellularLocation>
</comment>
<comment type="domain">
    <text evidence="1">Domain I is involved in oligomerization and binding regulators, domain II is flexibile and of varying length in different bacteria, domain III forms the AAA+ region, while domain IV binds dsDNA.</text>
</comment>
<comment type="similarity">
    <text evidence="1">Belongs to the DnaA family.</text>
</comment>
<sequence length="464" mass="52966">MDAVGYEVFWNETLSQIRSESTEAEFNMWFAHLFFIASFENAIEIAVPSDFFRIQFSQKYQEKLERKFLELSGHPIKLLFAVKKGTPHGNTAPPKHVHTYLEKNSPAEVPSKKSFHPDLNRDYTFENFVSGEETKFSHSAAISVSKNPGTSYNPLLIYGGVGLGKTHLMQAIGHEIYKTTDLNVIYVTAENFGNEFISTLLNKKTQDFKKKYRYTADVLLIDDIHFFENKDGLQEELFYTFNELFEKKKQIIFTCDRPVQELKNLSSRLRSRCSRGLSTDLNMPCFETRCAILIKKIQNYNSTYPHKAIHISDDVVRLVSENISSNIRDLEGALTKIIAFIEVSGSITIDIVPSLLKEFFLSARPKHITVETILHVVADHFNISYSDLKGKKRNKSVVYPRQIAMFLSKELTELSTTELGIEFGGRDHSTVIYGCQKIEGEILTNPSLQANLDLLKSKVQDSIR</sequence>
<proteinExistence type="evidence at protein level"/>
<accession>O83047</accession>
<evidence type="ECO:0000255" key="1">
    <source>
        <dbReference type="HAMAP-Rule" id="MF_00377"/>
    </source>
</evidence>
<dbReference type="EMBL" id="AE000520">
    <property type="protein sequence ID" value="AAC64999.1"/>
    <property type="molecule type" value="Genomic_DNA"/>
</dbReference>
<dbReference type="PIR" id="H71377">
    <property type="entry name" value="H71377"/>
</dbReference>
<dbReference type="RefSeq" id="WP_010881451.1">
    <property type="nucleotide sequence ID" value="NC_021490.2"/>
</dbReference>
<dbReference type="SMR" id="O83047"/>
<dbReference type="IntAct" id="O83047">
    <property type="interactions" value="4"/>
</dbReference>
<dbReference type="STRING" id="243276.TP_0001"/>
<dbReference type="EnsemblBacteria" id="AAC64999">
    <property type="protein sequence ID" value="AAC64999"/>
    <property type="gene ID" value="TP_0001"/>
</dbReference>
<dbReference type="GeneID" id="93875801"/>
<dbReference type="KEGG" id="tpa:TP_0001"/>
<dbReference type="KEGG" id="tpw:TPANIC_0001"/>
<dbReference type="eggNOG" id="COG0593">
    <property type="taxonomic scope" value="Bacteria"/>
</dbReference>
<dbReference type="HOGENOM" id="CLU_026910_3_1_12"/>
<dbReference type="OrthoDB" id="9807019at2"/>
<dbReference type="Proteomes" id="UP000000811">
    <property type="component" value="Chromosome"/>
</dbReference>
<dbReference type="GO" id="GO:0005737">
    <property type="term" value="C:cytoplasm"/>
    <property type="evidence" value="ECO:0007669"/>
    <property type="project" value="UniProtKB-SubCell"/>
</dbReference>
<dbReference type="GO" id="GO:0005886">
    <property type="term" value="C:plasma membrane"/>
    <property type="evidence" value="ECO:0007669"/>
    <property type="project" value="TreeGrafter"/>
</dbReference>
<dbReference type="GO" id="GO:0005524">
    <property type="term" value="F:ATP binding"/>
    <property type="evidence" value="ECO:0007669"/>
    <property type="project" value="UniProtKB-UniRule"/>
</dbReference>
<dbReference type="GO" id="GO:0016887">
    <property type="term" value="F:ATP hydrolysis activity"/>
    <property type="evidence" value="ECO:0007669"/>
    <property type="project" value="InterPro"/>
</dbReference>
<dbReference type="GO" id="GO:0003688">
    <property type="term" value="F:DNA replication origin binding"/>
    <property type="evidence" value="ECO:0007669"/>
    <property type="project" value="UniProtKB-UniRule"/>
</dbReference>
<dbReference type="GO" id="GO:0008289">
    <property type="term" value="F:lipid binding"/>
    <property type="evidence" value="ECO:0007669"/>
    <property type="project" value="UniProtKB-KW"/>
</dbReference>
<dbReference type="GO" id="GO:0006270">
    <property type="term" value="P:DNA replication initiation"/>
    <property type="evidence" value="ECO:0007669"/>
    <property type="project" value="UniProtKB-UniRule"/>
</dbReference>
<dbReference type="GO" id="GO:0006275">
    <property type="term" value="P:regulation of DNA replication"/>
    <property type="evidence" value="ECO:0007669"/>
    <property type="project" value="UniProtKB-UniRule"/>
</dbReference>
<dbReference type="CDD" id="cd00009">
    <property type="entry name" value="AAA"/>
    <property type="match status" value="1"/>
</dbReference>
<dbReference type="CDD" id="cd06571">
    <property type="entry name" value="Bac_DnaA_C"/>
    <property type="match status" value="1"/>
</dbReference>
<dbReference type="Gene3D" id="1.10.1750.10">
    <property type="match status" value="1"/>
</dbReference>
<dbReference type="Gene3D" id="1.10.8.60">
    <property type="match status" value="1"/>
</dbReference>
<dbReference type="Gene3D" id="3.30.300.180">
    <property type="match status" value="1"/>
</dbReference>
<dbReference type="Gene3D" id="3.40.50.300">
    <property type="entry name" value="P-loop containing nucleotide triphosphate hydrolases"/>
    <property type="match status" value="1"/>
</dbReference>
<dbReference type="HAMAP" id="MF_00377">
    <property type="entry name" value="DnaA_bact"/>
    <property type="match status" value="1"/>
</dbReference>
<dbReference type="InterPro" id="IPR003593">
    <property type="entry name" value="AAA+_ATPase"/>
</dbReference>
<dbReference type="InterPro" id="IPR001957">
    <property type="entry name" value="Chromosome_initiator_DnaA"/>
</dbReference>
<dbReference type="InterPro" id="IPR020591">
    <property type="entry name" value="Chromosome_initiator_DnaA-like"/>
</dbReference>
<dbReference type="InterPro" id="IPR018312">
    <property type="entry name" value="Chromosome_initiator_DnaA_CS"/>
</dbReference>
<dbReference type="InterPro" id="IPR013159">
    <property type="entry name" value="DnaA_C"/>
</dbReference>
<dbReference type="InterPro" id="IPR013317">
    <property type="entry name" value="DnaA_dom"/>
</dbReference>
<dbReference type="InterPro" id="IPR024633">
    <property type="entry name" value="DnaA_N_dom"/>
</dbReference>
<dbReference type="InterPro" id="IPR038454">
    <property type="entry name" value="DnaA_N_sf"/>
</dbReference>
<dbReference type="InterPro" id="IPR027417">
    <property type="entry name" value="P-loop_NTPase"/>
</dbReference>
<dbReference type="InterPro" id="IPR010921">
    <property type="entry name" value="Trp_repressor/repl_initiator"/>
</dbReference>
<dbReference type="NCBIfam" id="TIGR00362">
    <property type="entry name" value="DnaA"/>
    <property type="match status" value="1"/>
</dbReference>
<dbReference type="PANTHER" id="PTHR30050">
    <property type="entry name" value="CHROMOSOMAL REPLICATION INITIATOR PROTEIN DNAA"/>
    <property type="match status" value="1"/>
</dbReference>
<dbReference type="PANTHER" id="PTHR30050:SF2">
    <property type="entry name" value="CHROMOSOMAL REPLICATION INITIATOR PROTEIN DNAA"/>
    <property type="match status" value="1"/>
</dbReference>
<dbReference type="Pfam" id="PF00308">
    <property type="entry name" value="Bac_DnaA"/>
    <property type="match status" value="1"/>
</dbReference>
<dbReference type="Pfam" id="PF08299">
    <property type="entry name" value="Bac_DnaA_C"/>
    <property type="match status" value="1"/>
</dbReference>
<dbReference type="Pfam" id="PF11638">
    <property type="entry name" value="DnaA_N"/>
    <property type="match status" value="1"/>
</dbReference>
<dbReference type="PRINTS" id="PR00051">
    <property type="entry name" value="DNAA"/>
</dbReference>
<dbReference type="SMART" id="SM00382">
    <property type="entry name" value="AAA"/>
    <property type="match status" value="1"/>
</dbReference>
<dbReference type="SMART" id="SM00760">
    <property type="entry name" value="Bac_DnaA_C"/>
    <property type="match status" value="1"/>
</dbReference>
<dbReference type="SUPFAM" id="SSF52540">
    <property type="entry name" value="P-loop containing nucleoside triphosphate hydrolases"/>
    <property type="match status" value="1"/>
</dbReference>
<dbReference type="SUPFAM" id="SSF48295">
    <property type="entry name" value="TrpR-like"/>
    <property type="match status" value="1"/>
</dbReference>
<dbReference type="PROSITE" id="PS01008">
    <property type="entry name" value="DNAA"/>
    <property type="match status" value="1"/>
</dbReference>
<organism>
    <name type="scientific">Treponema pallidum (strain Nichols)</name>
    <dbReference type="NCBI Taxonomy" id="243276"/>
    <lineage>
        <taxon>Bacteria</taxon>
        <taxon>Pseudomonadati</taxon>
        <taxon>Spirochaetota</taxon>
        <taxon>Spirochaetia</taxon>
        <taxon>Spirochaetales</taxon>
        <taxon>Treponemataceae</taxon>
        <taxon>Treponema</taxon>
    </lineage>
</organism>
<protein>
    <recommendedName>
        <fullName evidence="1">Chromosomal replication initiator protein DnaA</fullName>
    </recommendedName>
</protein>
<name>DNAA_TREPA</name>
<reference key="1">
    <citation type="journal article" date="1998" name="Science">
        <title>Complete genome sequence of Treponema pallidum, the syphilis spirochete.</title>
        <authorList>
            <person name="Fraser C.M."/>
            <person name="Norris S.J."/>
            <person name="Weinstock G.M."/>
            <person name="White O."/>
            <person name="Sutton G.G."/>
            <person name="Dodson R.J."/>
            <person name="Gwinn M.L."/>
            <person name="Hickey E.K."/>
            <person name="Clayton R.A."/>
            <person name="Ketchum K.A."/>
            <person name="Sodergren E."/>
            <person name="Hardham J.M."/>
            <person name="McLeod M.P."/>
            <person name="Salzberg S.L."/>
            <person name="Peterson J.D."/>
            <person name="Khalak H.G."/>
            <person name="Richardson D.L."/>
            <person name="Howell J.K."/>
            <person name="Chidambaram M."/>
            <person name="Utterback T.R."/>
            <person name="McDonald L.A."/>
            <person name="Artiach P."/>
            <person name="Bowman C."/>
            <person name="Cotton M.D."/>
            <person name="Fujii C."/>
            <person name="Garland S.A."/>
            <person name="Hatch B."/>
            <person name="Horst K."/>
            <person name="Roberts K.M."/>
            <person name="Sandusky M."/>
            <person name="Weidman J.F."/>
            <person name="Smith H.O."/>
            <person name="Venter J.C."/>
        </authorList>
    </citation>
    <scope>NUCLEOTIDE SEQUENCE [LARGE SCALE GENOMIC DNA]</scope>
    <source>
        <strain>Nichols</strain>
    </source>
</reference>
<keyword id="KW-0067">ATP-binding</keyword>
<keyword id="KW-0963">Cytoplasm</keyword>
<keyword id="KW-0235">DNA replication</keyword>
<keyword id="KW-0238">DNA-binding</keyword>
<keyword id="KW-0446">Lipid-binding</keyword>
<keyword id="KW-0547">Nucleotide-binding</keyword>
<keyword id="KW-1185">Reference proteome</keyword>
<gene>
    <name evidence="1" type="primary">dnaA</name>
    <name type="ordered locus">TP_0001</name>
</gene>
<feature type="chain" id="PRO_0000114291" description="Chromosomal replication initiator protein DnaA">
    <location>
        <begin position="1"/>
        <end position="464"/>
    </location>
</feature>
<feature type="region of interest" description="Domain I, interacts with DnaA modulators" evidence="1">
    <location>
        <begin position="1"/>
        <end position="74"/>
    </location>
</feature>
<feature type="region of interest" description="Domain II" evidence="1">
    <location>
        <begin position="74"/>
        <end position="117"/>
    </location>
</feature>
<feature type="region of interest" description="Domain III, AAA+ region" evidence="1">
    <location>
        <begin position="118"/>
        <end position="341"/>
    </location>
</feature>
<feature type="region of interest" description="Domain IV, binds dsDNA" evidence="1">
    <location>
        <begin position="342"/>
        <end position="464"/>
    </location>
</feature>
<feature type="binding site" evidence="1">
    <location>
        <position position="162"/>
    </location>
    <ligand>
        <name>ATP</name>
        <dbReference type="ChEBI" id="CHEBI:30616"/>
    </ligand>
</feature>
<feature type="binding site" evidence="1">
    <location>
        <position position="164"/>
    </location>
    <ligand>
        <name>ATP</name>
        <dbReference type="ChEBI" id="CHEBI:30616"/>
    </ligand>
</feature>
<feature type="binding site" evidence="1">
    <location>
        <position position="165"/>
    </location>
    <ligand>
        <name>ATP</name>
        <dbReference type="ChEBI" id="CHEBI:30616"/>
    </ligand>
</feature>
<feature type="binding site" evidence="1">
    <location>
        <position position="166"/>
    </location>
    <ligand>
        <name>ATP</name>
        <dbReference type="ChEBI" id="CHEBI:30616"/>
    </ligand>
</feature>